<gene>
    <name evidence="1" type="primary">hldD</name>
    <name type="ordered locus">RALTA_A0785</name>
</gene>
<protein>
    <recommendedName>
        <fullName evidence="1">ADP-L-glycero-D-manno-heptose-6-epimerase</fullName>
        <ecNumber evidence="1">5.1.3.20</ecNumber>
    </recommendedName>
    <alternativeName>
        <fullName evidence="1">ADP-L-glycero-beta-D-manno-heptose-6-epimerase</fullName>
        <shortName evidence="1">ADP-glyceromanno-heptose 6-epimerase</shortName>
        <shortName evidence="1">ADP-hep 6-epimerase</shortName>
        <shortName evidence="1">AGME</shortName>
    </alternativeName>
</protein>
<name>HLDD_CUPTR</name>
<dbReference type="EC" id="5.1.3.20" evidence="1"/>
<dbReference type="EMBL" id="CU633749">
    <property type="protein sequence ID" value="CAQ68757.1"/>
    <property type="molecule type" value="Genomic_DNA"/>
</dbReference>
<dbReference type="RefSeq" id="WP_012352094.1">
    <property type="nucleotide sequence ID" value="NC_010528.1"/>
</dbReference>
<dbReference type="SMR" id="B3R3C0"/>
<dbReference type="GeneID" id="29763280"/>
<dbReference type="KEGG" id="cti:RALTA_A0785"/>
<dbReference type="eggNOG" id="COG0451">
    <property type="taxonomic scope" value="Bacteria"/>
</dbReference>
<dbReference type="HOGENOM" id="CLU_007383_1_3_4"/>
<dbReference type="BioCyc" id="CTAI977880:RALTA_RS03790-MONOMER"/>
<dbReference type="UniPathway" id="UPA00356">
    <property type="reaction ID" value="UER00440"/>
</dbReference>
<dbReference type="Proteomes" id="UP000001692">
    <property type="component" value="Chromosome 1"/>
</dbReference>
<dbReference type="GO" id="GO:0008712">
    <property type="term" value="F:ADP-glyceromanno-heptose 6-epimerase activity"/>
    <property type="evidence" value="ECO:0007669"/>
    <property type="project" value="UniProtKB-UniRule"/>
</dbReference>
<dbReference type="GO" id="GO:0050661">
    <property type="term" value="F:NADP binding"/>
    <property type="evidence" value="ECO:0007669"/>
    <property type="project" value="InterPro"/>
</dbReference>
<dbReference type="GO" id="GO:0097171">
    <property type="term" value="P:ADP-L-glycero-beta-D-manno-heptose biosynthetic process"/>
    <property type="evidence" value="ECO:0007669"/>
    <property type="project" value="UniProtKB-UniPathway"/>
</dbReference>
<dbReference type="GO" id="GO:0005975">
    <property type="term" value="P:carbohydrate metabolic process"/>
    <property type="evidence" value="ECO:0007669"/>
    <property type="project" value="UniProtKB-UniRule"/>
</dbReference>
<dbReference type="CDD" id="cd05248">
    <property type="entry name" value="ADP_GME_SDR_e"/>
    <property type="match status" value="1"/>
</dbReference>
<dbReference type="Gene3D" id="3.40.50.720">
    <property type="entry name" value="NAD(P)-binding Rossmann-like Domain"/>
    <property type="match status" value="1"/>
</dbReference>
<dbReference type="Gene3D" id="3.90.25.10">
    <property type="entry name" value="UDP-galactose 4-epimerase, domain 1"/>
    <property type="match status" value="1"/>
</dbReference>
<dbReference type="HAMAP" id="MF_01601">
    <property type="entry name" value="Heptose_epimerase"/>
    <property type="match status" value="1"/>
</dbReference>
<dbReference type="InterPro" id="IPR001509">
    <property type="entry name" value="Epimerase_deHydtase"/>
</dbReference>
<dbReference type="InterPro" id="IPR011912">
    <property type="entry name" value="Heptose_epim"/>
</dbReference>
<dbReference type="InterPro" id="IPR036291">
    <property type="entry name" value="NAD(P)-bd_dom_sf"/>
</dbReference>
<dbReference type="NCBIfam" id="TIGR02197">
    <property type="entry name" value="heptose_epim"/>
    <property type="match status" value="1"/>
</dbReference>
<dbReference type="PANTHER" id="PTHR43103:SF3">
    <property type="entry name" value="ADP-L-GLYCERO-D-MANNO-HEPTOSE-6-EPIMERASE"/>
    <property type="match status" value="1"/>
</dbReference>
<dbReference type="PANTHER" id="PTHR43103">
    <property type="entry name" value="NUCLEOSIDE-DIPHOSPHATE-SUGAR EPIMERASE"/>
    <property type="match status" value="1"/>
</dbReference>
<dbReference type="Pfam" id="PF01370">
    <property type="entry name" value="Epimerase"/>
    <property type="match status" value="1"/>
</dbReference>
<dbReference type="SUPFAM" id="SSF51735">
    <property type="entry name" value="NAD(P)-binding Rossmann-fold domains"/>
    <property type="match status" value="1"/>
</dbReference>
<feature type="chain" id="PRO_1000190401" description="ADP-L-glycero-D-manno-heptose-6-epimerase">
    <location>
        <begin position="1"/>
        <end position="331"/>
    </location>
</feature>
<feature type="active site" description="Proton acceptor" evidence="1">
    <location>
        <position position="139"/>
    </location>
</feature>
<feature type="active site" description="Proton acceptor" evidence="1">
    <location>
        <position position="177"/>
    </location>
</feature>
<feature type="binding site" evidence="1">
    <location>
        <begin position="11"/>
        <end position="12"/>
    </location>
    <ligand>
        <name>NADP(+)</name>
        <dbReference type="ChEBI" id="CHEBI:58349"/>
    </ligand>
</feature>
<feature type="binding site" evidence="1">
    <location>
        <begin position="32"/>
        <end position="33"/>
    </location>
    <ligand>
        <name>NADP(+)</name>
        <dbReference type="ChEBI" id="CHEBI:58349"/>
    </ligand>
</feature>
<feature type="binding site" evidence="1">
    <location>
        <position position="39"/>
    </location>
    <ligand>
        <name>NADP(+)</name>
        <dbReference type="ChEBI" id="CHEBI:58349"/>
    </ligand>
</feature>
<feature type="binding site" evidence="1">
    <location>
        <position position="54"/>
    </location>
    <ligand>
        <name>NADP(+)</name>
        <dbReference type="ChEBI" id="CHEBI:58349"/>
    </ligand>
</feature>
<feature type="binding site" evidence="1">
    <location>
        <begin position="75"/>
        <end position="79"/>
    </location>
    <ligand>
        <name>NADP(+)</name>
        <dbReference type="ChEBI" id="CHEBI:58349"/>
    </ligand>
</feature>
<feature type="binding site" evidence="1">
    <location>
        <position position="92"/>
    </location>
    <ligand>
        <name>NADP(+)</name>
        <dbReference type="ChEBI" id="CHEBI:58349"/>
    </ligand>
</feature>
<feature type="binding site" evidence="1">
    <location>
        <position position="143"/>
    </location>
    <ligand>
        <name>NADP(+)</name>
        <dbReference type="ChEBI" id="CHEBI:58349"/>
    </ligand>
</feature>
<feature type="binding site" evidence="1">
    <location>
        <position position="168"/>
    </location>
    <ligand>
        <name>substrate</name>
    </ligand>
</feature>
<feature type="binding site" evidence="1">
    <location>
        <position position="169"/>
    </location>
    <ligand>
        <name>NADP(+)</name>
        <dbReference type="ChEBI" id="CHEBI:58349"/>
    </ligand>
</feature>
<feature type="binding site" evidence="1">
    <location>
        <position position="177"/>
    </location>
    <ligand>
        <name>NADP(+)</name>
        <dbReference type="ChEBI" id="CHEBI:58349"/>
    </ligand>
</feature>
<feature type="binding site" evidence="1">
    <location>
        <position position="179"/>
    </location>
    <ligand>
        <name>substrate</name>
    </ligand>
</feature>
<feature type="binding site" evidence="1">
    <location>
        <position position="186"/>
    </location>
    <ligand>
        <name>substrate</name>
    </ligand>
</feature>
<feature type="binding site" evidence="1">
    <location>
        <begin position="200"/>
        <end position="203"/>
    </location>
    <ligand>
        <name>substrate</name>
    </ligand>
</feature>
<feature type="binding site" evidence="1">
    <location>
        <position position="213"/>
    </location>
    <ligand>
        <name>substrate</name>
    </ligand>
</feature>
<feature type="binding site" evidence="1">
    <location>
        <position position="292"/>
    </location>
    <ligand>
        <name>substrate</name>
    </ligand>
</feature>
<evidence type="ECO:0000255" key="1">
    <source>
        <dbReference type="HAMAP-Rule" id="MF_01601"/>
    </source>
</evidence>
<reference key="1">
    <citation type="journal article" date="2008" name="Genome Res.">
        <title>Genome sequence of the beta-rhizobium Cupriavidus taiwanensis and comparative genomics of rhizobia.</title>
        <authorList>
            <person name="Amadou C."/>
            <person name="Pascal G."/>
            <person name="Mangenot S."/>
            <person name="Glew M."/>
            <person name="Bontemps C."/>
            <person name="Capela D."/>
            <person name="Carrere S."/>
            <person name="Cruveiller S."/>
            <person name="Dossat C."/>
            <person name="Lajus A."/>
            <person name="Marchetti M."/>
            <person name="Poinsot V."/>
            <person name="Rouy Z."/>
            <person name="Servin B."/>
            <person name="Saad M."/>
            <person name="Schenowitz C."/>
            <person name="Barbe V."/>
            <person name="Batut J."/>
            <person name="Medigue C."/>
            <person name="Masson-Boivin C."/>
        </authorList>
    </citation>
    <scope>NUCLEOTIDE SEQUENCE [LARGE SCALE GENOMIC DNA]</scope>
    <source>
        <strain>DSM 17343 / BCRC 17206 / CCUG 44338 / CIP 107171 / LMG 19424 / R1</strain>
    </source>
</reference>
<comment type="function">
    <text evidence="1">Catalyzes the interconversion between ADP-D-glycero-beta-D-manno-heptose and ADP-L-glycero-beta-D-manno-heptose via an epimerization at carbon 6 of the heptose.</text>
</comment>
<comment type="catalytic activity">
    <reaction evidence="1">
        <text>ADP-D-glycero-beta-D-manno-heptose = ADP-L-glycero-beta-D-manno-heptose</text>
        <dbReference type="Rhea" id="RHEA:17577"/>
        <dbReference type="ChEBI" id="CHEBI:59967"/>
        <dbReference type="ChEBI" id="CHEBI:61506"/>
        <dbReference type="EC" id="5.1.3.20"/>
    </reaction>
</comment>
<comment type="cofactor">
    <cofactor evidence="1">
        <name>NADP(+)</name>
        <dbReference type="ChEBI" id="CHEBI:58349"/>
    </cofactor>
    <text evidence="1">Binds 1 NADP(+) per subunit.</text>
</comment>
<comment type="pathway">
    <text evidence="1">Nucleotide-sugar biosynthesis; ADP-L-glycero-beta-D-manno-heptose biosynthesis; ADP-L-glycero-beta-D-manno-heptose from D-glycero-beta-D-manno-heptose 7-phosphate: step 4/4.</text>
</comment>
<comment type="subunit">
    <text evidence="1">Homopentamer.</text>
</comment>
<comment type="domain">
    <text evidence="1">Contains a large N-terminal NADP-binding domain, and a smaller C-terminal substrate-binding domain.</text>
</comment>
<comment type="similarity">
    <text evidence="1">Belongs to the NAD(P)-dependent epimerase/dehydratase family. HldD subfamily.</text>
</comment>
<keyword id="KW-0119">Carbohydrate metabolism</keyword>
<keyword id="KW-0413">Isomerase</keyword>
<keyword id="KW-0521">NADP</keyword>
<sequence length="331" mass="37437">MTIIVTGAAGFIGSNLVKGLNERGETNVIAVDNLTRADKFHNLVDCEISDYLDKQDFLARFARGEFGKVRAVFHEGACSDTMETDGRYMMENNYRYTLSLMESCLEQGTQFLYASSAATYGASQVFREDREFERPLNVYGYSKFLFDQIVRRRLPSALSQIVGFRYFNVYGPRETHKGRMASVAFHNFNQFRADGTVKLFGEYGGYGPGMQSRDFISVEDVVKVNLFFFDHPEKSGIFNLGTGRAQPFNDIAATVVNTLREAEGKPPLSLDDLVQEGLVEYVKFPDALRGKYQCFTQSDVSKLRGAGYSERFLSVEEGVARYCRWLLERNG</sequence>
<organism>
    <name type="scientific">Cupriavidus taiwanensis (strain DSM 17343 / BCRC 17206 / CCUG 44338 / CIP 107171 / LMG 19424 / R1)</name>
    <name type="common">Ralstonia taiwanensis (strain LMG 19424)</name>
    <dbReference type="NCBI Taxonomy" id="977880"/>
    <lineage>
        <taxon>Bacteria</taxon>
        <taxon>Pseudomonadati</taxon>
        <taxon>Pseudomonadota</taxon>
        <taxon>Betaproteobacteria</taxon>
        <taxon>Burkholderiales</taxon>
        <taxon>Burkholderiaceae</taxon>
        <taxon>Cupriavidus</taxon>
    </lineage>
</organism>
<proteinExistence type="inferred from homology"/>
<accession>B3R3C0</accession>